<sequence length="638" mass="69605">MTSTIDSDGAAESRVFEADVAKLLQMMVHSVYSDKDVFLRELISNAADACERLRYDAISDPALLADDARPQIAITIDAERRQLTVDDNGIGMSRDEMVDALGTIARSGTKAFIEQAKVEQAKSAEAGDGVTVIGQFGVGFYSAFMVADQVDVISRRAGAGEAWRWSSDGKGTFTVTPADESEAPARGTRVMLHLTEDAKGYTDRLKLEQIVREQSGHVPVPIVLVEQPGAAPTEIADGAALWTKPRGEIGTSEYVDFYRSVAGHFDEPALTVHFRAEGRQEFTALLFVPQTRSFDLFETDRKGPIKLYVKRVFITDDADLLPRYLRFVRGVVDSADLPLNISREMIQESPILAAIKKSITGRVLSELEKLAEKDAQAYGKVWEAFGPMFKEGIYDAADRRDAILSLCRFRTTAGSLRSLKDYVGALKDNQTSIYYLAGQDAARLEASPHLEGFRARGVEVLLLSDPVDSFWVTSAPSFEGKPFKSVTQGDTDLAAIPRVDASAETLQEVSASVTEFLAFLKTTLADLVSDVRSSERLTDSPVCLIAAESGPDRQLEKILVGVGQLTGASKPVLEVNPRHPLIASLAALGDGDRAFKEDTARMLLDDARVLDGDRPSDALEFSRRLARIVERGLRGSTA</sequence>
<organism>
    <name type="scientific">Nitrobacter hamburgensis (strain DSM 10229 / NCIMB 13809 / X14)</name>
    <dbReference type="NCBI Taxonomy" id="323097"/>
    <lineage>
        <taxon>Bacteria</taxon>
        <taxon>Pseudomonadati</taxon>
        <taxon>Pseudomonadota</taxon>
        <taxon>Alphaproteobacteria</taxon>
        <taxon>Hyphomicrobiales</taxon>
        <taxon>Nitrobacteraceae</taxon>
        <taxon>Nitrobacter</taxon>
    </lineage>
</organism>
<comment type="function">
    <text evidence="1">Molecular chaperone. Has ATPase activity.</text>
</comment>
<comment type="subunit">
    <text evidence="1">Homodimer.</text>
</comment>
<comment type="subcellular location">
    <subcellularLocation>
        <location evidence="1">Cytoplasm</location>
    </subcellularLocation>
</comment>
<comment type="similarity">
    <text evidence="1">Belongs to the heat shock protein 90 family.</text>
</comment>
<reference key="1">
    <citation type="submission" date="2006-03" db="EMBL/GenBank/DDBJ databases">
        <title>Complete sequence of chromosome of Nitrobacter hamburgensis X14.</title>
        <authorList>
            <consortium name="US DOE Joint Genome Institute"/>
            <person name="Copeland A."/>
            <person name="Lucas S."/>
            <person name="Lapidus A."/>
            <person name="Barry K."/>
            <person name="Detter J.C."/>
            <person name="Glavina del Rio T."/>
            <person name="Hammon N."/>
            <person name="Israni S."/>
            <person name="Dalin E."/>
            <person name="Tice H."/>
            <person name="Pitluck S."/>
            <person name="Chain P."/>
            <person name="Malfatti S."/>
            <person name="Shin M."/>
            <person name="Vergez L."/>
            <person name="Schmutz J."/>
            <person name="Larimer F."/>
            <person name="Land M."/>
            <person name="Hauser L."/>
            <person name="Kyrpides N."/>
            <person name="Ivanova N."/>
            <person name="Ward B."/>
            <person name="Arp D."/>
            <person name="Klotz M."/>
            <person name="Stein L."/>
            <person name="O'Mullan G."/>
            <person name="Starkenburg S."/>
            <person name="Sayavedra L."/>
            <person name="Poret-Peterson A.T."/>
            <person name="Gentry M.E."/>
            <person name="Bruce D."/>
            <person name="Richardson P."/>
        </authorList>
    </citation>
    <scope>NUCLEOTIDE SEQUENCE [LARGE SCALE GENOMIC DNA]</scope>
    <source>
        <strain>DSM 10229 / NCIMB 13809 / X14</strain>
    </source>
</reference>
<name>HTPG_NITHX</name>
<keyword id="KW-0067">ATP-binding</keyword>
<keyword id="KW-0143">Chaperone</keyword>
<keyword id="KW-0963">Cytoplasm</keyword>
<keyword id="KW-0547">Nucleotide-binding</keyword>
<keyword id="KW-1185">Reference proteome</keyword>
<keyword id="KW-0346">Stress response</keyword>
<accession>Q1QHD7</accession>
<dbReference type="EMBL" id="CP000319">
    <property type="protein sequence ID" value="ABE64360.1"/>
    <property type="molecule type" value="Genomic_DNA"/>
</dbReference>
<dbReference type="RefSeq" id="WP_011512001.1">
    <property type="nucleotide sequence ID" value="NC_007964.1"/>
</dbReference>
<dbReference type="SMR" id="Q1QHD7"/>
<dbReference type="STRING" id="323097.Nham_3632"/>
<dbReference type="KEGG" id="nha:Nham_3632"/>
<dbReference type="eggNOG" id="COG0326">
    <property type="taxonomic scope" value="Bacteria"/>
</dbReference>
<dbReference type="HOGENOM" id="CLU_006684_3_0_5"/>
<dbReference type="OrthoDB" id="9802640at2"/>
<dbReference type="Proteomes" id="UP000001953">
    <property type="component" value="Chromosome"/>
</dbReference>
<dbReference type="GO" id="GO:0005737">
    <property type="term" value="C:cytoplasm"/>
    <property type="evidence" value="ECO:0007669"/>
    <property type="project" value="UniProtKB-SubCell"/>
</dbReference>
<dbReference type="GO" id="GO:0005524">
    <property type="term" value="F:ATP binding"/>
    <property type="evidence" value="ECO:0007669"/>
    <property type="project" value="UniProtKB-UniRule"/>
</dbReference>
<dbReference type="GO" id="GO:0016887">
    <property type="term" value="F:ATP hydrolysis activity"/>
    <property type="evidence" value="ECO:0007669"/>
    <property type="project" value="InterPro"/>
</dbReference>
<dbReference type="GO" id="GO:0140662">
    <property type="term" value="F:ATP-dependent protein folding chaperone"/>
    <property type="evidence" value="ECO:0007669"/>
    <property type="project" value="InterPro"/>
</dbReference>
<dbReference type="GO" id="GO:0051082">
    <property type="term" value="F:unfolded protein binding"/>
    <property type="evidence" value="ECO:0007669"/>
    <property type="project" value="UniProtKB-UniRule"/>
</dbReference>
<dbReference type="CDD" id="cd16927">
    <property type="entry name" value="HATPase_Hsp90-like"/>
    <property type="match status" value="1"/>
</dbReference>
<dbReference type="Gene3D" id="3.30.230.80">
    <property type="match status" value="1"/>
</dbReference>
<dbReference type="Gene3D" id="3.40.50.11260">
    <property type="match status" value="1"/>
</dbReference>
<dbReference type="Gene3D" id="1.20.120.790">
    <property type="entry name" value="Heat shock protein 90, C-terminal domain"/>
    <property type="match status" value="1"/>
</dbReference>
<dbReference type="Gene3D" id="3.30.565.10">
    <property type="entry name" value="Histidine kinase-like ATPase, C-terminal domain"/>
    <property type="match status" value="1"/>
</dbReference>
<dbReference type="HAMAP" id="MF_00505">
    <property type="entry name" value="HSP90"/>
    <property type="match status" value="1"/>
</dbReference>
<dbReference type="InterPro" id="IPR036890">
    <property type="entry name" value="HATPase_C_sf"/>
</dbReference>
<dbReference type="InterPro" id="IPR019805">
    <property type="entry name" value="Heat_shock_protein_90_CS"/>
</dbReference>
<dbReference type="InterPro" id="IPR037196">
    <property type="entry name" value="HSP90_C"/>
</dbReference>
<dbReference type="InterPro" id="IPR001404">
    <property type="entry name" value="Hsp90_fam"/>
</dbReference>
<dbReference type="InterPro" id="IPR020575">
    <property type="entry name" value="Hsp90_N"/>
</dbReference>
<dbReference type="InterPro" id="IPR020568">
    <property type="entry name" value="Ribosomal_Su5_D2-typ_SF"/>
</dbReference>
<dbReference type="NCBIfam" id="NF003555">
    <property type="entry name" value="PRK05218.1"/>
    <property type="match status" value="1"/>
</dbReference>
<dbReference type="PANTHER" id="PTHR11528">
    <property type="entry name" value="HEAT SHOCK PROTEIN 90 FAMILY MEMBER"/>
    <property type="match status" value="1"/>
</dbReference>
<dbReference type="Pfam" id="PF13589">
    <property type="entry name" value="HATPase_c_3"/>
    <property type="match status" value="1"/>
</dbReference>
<dbReference type="Pfam" id="PF00183">
    <property type="entry name" value="HSP90"/>
    <property type="match status" value="1"/>
</dbReference>
<dbReference type="PIRSF" id="PIRSF002583">
    <property type="entry name" value="Hsp90"/>
    <property type="match status" value="1"/>
</dbReference>
<dbReference type="PRINTS" id="PR00775">
    <property type="entry name" value="HEATSHOCK90"/>
</dbReference>
<dbReference type="SMART" id="SM00387">
    <property type="entry name" value="HATPase_c"/>
    <property type="match status" value="1"/>
</dbReference>
<dbReference type="SUPFAM" id="SSF55874">
    <property type="entry name" value="ATPase domain of HSP90 chaperone/DNA topoisomerase II/histidine kinase"/>
    <property type="match status" value="1"/>
</dbReference>
<dbReference type="SUPFAM" id="SSF110942">
    <property type="entry name" value="HSP90 C-terminal domain"/>
    <property type="match status" value="1"/>
</dbReference>
<dbReference type="SUPFAM" id="SSF54211">
    <property type="entry name" value="Ribosomal protein S5 domain 2-like"/>
    <property type="match status" value="1"/>
</dbReference>
<dbReference type="PROSITE" id="PS00298">
    <property type="entry name" value="HSP90"/>
    <property type="match status" value="1"/>
</dbReference>
<proteinExistence type="inferred from homology"/>
<protein>
    <recommendedName>
        <fullName evidence="1">Chaperone protein HtpG</fullName>
    </recommendedName>
    <alternativeName>
        <fullName evidence="1">Heat shock protein HtpG</fullName>
    </alternativeName>
    <alternativeName>
        <fullName evidence="1">High temperature protein G</fullName>
    </alternativeName>
</protein>
<feature type="chain" id="PRO_0000258516" description="Chaperone protein HtpG">
    <location>
        <begin position="1"/>
        <end position="638"/>
    </location>
</feature>
<feature type="region of interest" description="A; substrate-binding" evidence="1">
    <location>
        <begin position="1"/>
        <end position="343"/>
    </location>
</feature>
<feature type="region of interest" description="B" evidence="1">
    <location>
        <begin position="344"/>
        <end position="557"/>
    </location>
</feature>
<feature type="region of interest" description="C" evidence="1">
    <location>
        <begin position="558"/>
        <end position="638"/>
    </location>
</feature>
<evidence type="ECO:0000255" key="1">
    <source>
        <dbReference type="HAMAP-Rule" id="MF_00505"/>
    </source>
</evidence>
<gene>
    <name evidence="1" type="primary">htpG</name>
    <name type="ordered locus">Nham_3632</name>
</gene>